<organism>
    <name type="scientific">Methanococcoides burtonii (strain DSM 6242 / NBRC 107633 / OCM 468 / ACE-M)</name>
    <dbReference type="NCBI Taxonomy" id="259564"/>
    <lineage>
        <taxon>Archaea</taxon>
        <taxon>Methanobacteriati</taxon>
        <taxon>Methanobacteriota</taxon>
        <taxon>Stenosarchaea group</taxon>
        <taxon>Methanomicrobia</taxon>
        <taxon>Methanosarcinales</taxon>
        <taxon>Methanosarcinaceae</taxon>
        <taxon>Methanococcoides</taxon>
    </lineage>
</organism>
<protein>
    <recommendedName>
        <fullName evidence="1">Chorismate synthase</fullName>
        <shortName evidence="1">CS</shortName>
        <ecNumber evidence="1">4.2.3.5</ecNumber>
    </recommendedName>
    <alternativeName>
        <fullName evidence="1">5-enolpyruvylshikimate-3-phosphate phospholyase</fullName>
    </alternativeName>
</protein>
<evidence type="ECO:0000255" key="1">
    <source>
        <dbReference type="HAMAP-Rule" id="MF_00300"/>
    </source>
</evidence>
<name>AROC_METBU</name>
<sequence length="366" mass="39289">MPGNTFGHSFRITTWGESHGRALGVVIDGVPAGLPLDTEIVQKELDRRRPGQSAVSTPRSETDKVEIISGIFEGKTTGTPISMMVWNKDADSSSYDNIKDLPRPGHADYPYMEKYGIRDHRGGGRSSARETIGRVAAGAVAKEILSIFGIDIIAHVTELGGIRAKEMPFDTIKEHLEKTPVRCADLEAAQLMLEKVGKAREEHESIGGVVEIIAIGLPPGIGEPVFDKLDADIAKAIMSIGAVKGVEIGIGNEAAQMKGSQMNDPFILEDGKIIAQTNNAGGILGGLSTGMPIICRASVKPTPSISKVQHTVNTKEMKNSDIIIKGRHDPTIPPRMVPVAEAMMALVLVDHMIRSGHIHPNSLLKQ</sequence>
<proteinExistence type="inferred from homology"/>
<keyword id="KW-0028">Amino-acid biosynthesis</keyword>
<keyword id="KW-0057">Aromatic amino acid biosynthesis</keyword>
<keyword id="KW-0274">FAD</keyword>
<keyword id="KW-0285">Flavoprotein</keyword>
<keyword id="KW-0288">FMN</keyword>
<keyword id="KW-0456">Lyase</keyword>
<keyword id="KW-0521">NADP</keyword>
<reference key="1">
    <citation type="journal article" date="2009" name="ISME J.">
        <title>The genome sequence of the psychrophilic archaeon, Methanococcoides burtonii: the role of genome evolution in cold adaptation.</title>
        <authorList>
            <person name="Allen M.A."/>
            <person name="Lauro F.M."/>
            <person name="Williams T.J."/>
            <person name="Burg D."/>
            <person name="Siddiqui K.S."/>
            <person name="De Francisci D."/>
            <person name="Chong K.W."/>
            <person name="Pilak O."/>
            <person name="Chew H.H."/>
            <person name="De Maere M.Z."/>
            <person name="Ting L."/>
            <person name="Katrib M."/>
            <person name="Ng C."/>
            <person name="Sowers K.R."/>
            <person name="Galperin M.Y."/>
            <person name="Anderson I.J."/>
            <person name="Ivanova N."/>
            <person name="Dalin E."/>
            <person name="Martinez M."/>
            <person name="Lapidus A."/>
            <person name="Hauser L."/>
            <person name="Land M."/>
            <person name="Thomas T."/>
            <person name="Cavicchioli R."/>
        </authorList>
    </citation>
    <scope>NUCLEOTIDE SEQUENCE [LARGE SCALE GENOMIC DNA]</scope>
    <source>
        <strain>DSM 6242 / NBRC 107633 / OCM 468 / ACE-M</strain>
    </source>
</reference>
<gene>
    <name evidence="1" type="primary">aroC</name>
    <name type="ordered locus">Mbur_1012</name>
</gene>
<accession>Q12X75</accession>
<dbReference type="EC" id="4.2.3.5" evidence="1"/>
<dbReference type="EMBL" id="CP000300">
    <property type="protein sequence ID" value="ABE51951.1"/>
    <property type="molecule type" value="Genomic_DNA"/>
</dbReference>
<dbReference type="RefSeq" id="WP_011499100.1">
    <property type="nucleotide sequence ID" value="NC_007955.1"/>
</dbReference>
<dbReference type="SMR" id="Q12X75"/>
<dbReference type="STRING" id="259564.Mbur_1012"/>
<dbReference type="GeneID" id="3998117"/>
<dbReference type="KEGG" id="mbu:Mbur_1012"/>
<dbReference type="HOGENOM" id="CLU_034547_0_2_2"/>
<dbReference type="OrthoDB" id="33049at2157"/>
<dbReference type="UniPathway" id="UPA00053">
    <property type="reaction ID" value="UER00090"/>
</dbReference>
<dbReference type="Proteomes" id="UP000001979">
    <property type="component" value="Chromosome"/>
</dbReference>
<dbReference type="GO" id="GO:0005829">
    <property type="term" value="C:cytosol"/>
    <property type="evidence" value="ECO:0007669"/>
    <property type="project" value="TreeGrafter"/>
</dbReference>
<dbReference type="GO" id="GO:0004107">
    <property type="term" value="F:chorismate synthase activity"/>
    <property type="evidence" value="ECO:0007669"/>
    <property type="project" value="UniProtKB-UniRule"/>
</dbReference>
<dbReference type="GO" id="GO:0010181">
    <property type="term" value="F:FMN binding"/>
    <property type="evidence" value="ECO:0007669"/>
    <property type="project" value="TreeGrafter"/>
</dbReference>
<dbReference type="GO" id="GO:0008652">
    <property type="term" value="P:amino acid biosynthetic process"/>
    <property type="evidence" value="ECO:0007669"/>
    <property type="project" value="UniProtKB-KW"/>
</dbReference>
<dbReference type="GO" id="GO:0009073">
    <property type="term" value="P:aromatic amino acid family biosynthetic process"/>
    <property type="evidence" value="ECO:0007669"/>
    <property type="project" value="UniProtKB-KW"/>
</dbReference>
<dbReference type="GO" id="GO:0009423">
    <property type="term" value="P:chorismate biosynthetic process"/>
    <property type="evidence" value="ECO:0007669"/>
    <property type="project" value="UniProtKB-UniRule"/>
</dbReference>
<dbReference type="CDD" id="cd07304">
    <property type="entry name" value="Chorismate_synthase"/>
    <property type="match status" value="1"/>
</dbReference>
<dbReference type="FunFam" id="3.60.150.10:FF:000002">
    <property type="entry name" value="Chorismate synthase"/>
    <property type="match status" value="1"/>
</dbReference>
<dbReference type="Gene3D" id="3.60.150.10">
    <property type="entry name" value="Chorismate synthase AroC"/>
    <property type="match status" value="1"/>
</dbReference>
<dbReference type="HAMAP" id="MF_00300">
    <property type="entry name" value="Chorismate_synth"/>
    <property type="match status" value="1"/>
</dbReference>
<dbReference type="InterPro" id="IPR000453">
    <property type="entry name" value="Chorismate_synth"/>
</dbReference>
<dbReference type="InterPro" id="IPR035904">
    <property type="entry name" value="Chorismate_synth_AroC_sf"/>
</dbReference>
<dbReference type="InterPro" id="IPR020541">
    <property type="entry name" value="Chorismate_synthase_CS"/>
</dbReference>
<dbReference type="NCBIfam" id="TIGR00033">
    <property type="entry name" value="aroC"/>
    <property type="match status" value="1"/>
</dbReference>
<dbReference type="NCBIfam" id="NF003793">
    <property type="entry name" value="PRK05382.1"/>
    <property type="match status" value="1"/>
</dbReference>
<dbReference type="PANTHER" id="PTHR21085">
    <property type="entry name" value="CHORISMATE SYNTHASE"/>
    <property type="match status" value="1"/>
</dbReference>
<dbReference type="PANTHER" id="PTHR21085:SF0">
    <property type="entry name" value="CHORISMATE SYNTHASE"/>
    <property type="match status" value="1"/>
</dbReference>
<dbReference type="Pfam" id="PF01264">
    <property type="entry name" value="Chorismate_synt"/>
    <property type="match status" value="1"/>
</dbReference>
<dbReference type="PIRSF" id="PIRSF001456">
    <property type="entry name" value="Chorismate_synth"/>
    <property type="match status" value="1"/>
</dbReference>
<dbReference type="SUPFAM" id="SSF103263">
    <property type="entry name" value="Chorismate synthase, AroC"/>
    <property type="match status" value="1"/>
</dbReference>
<dbReference type="PROSITE" id="PS00787">
    <property type="entry name" value="CHORISMATE_SYNTHASE_1"/>
    <property type="match status" value="1"/>
</dbReference>
<dbReference type="PROSITE" id="PS00788">
    <property type="entry name" value="CHORISMATE_SYNTHASE_2"/>
    <property type="match status" value="1"/>
</dbReference>
<dbReference type="PROSITE" id="PS00789">
    <property type="entry name" value="CHORISMATE_SYNTHASE_3"/>
    <property type="match status" value="1"/>
</dbReference>
<comment type="function">
    <text evidence="1">Catalyzes the anti-1,4-elimination of the C-3 phosphate and the C-6 proR hydrogen from 5-enolpyruvylshikimate-3-phosphate (EPSP) to yield chorismate, which is the branch point compound that serves as the starting substrate for the three terminal pathways of aromatic amino acid biosynthesis. This reaction introduces a second double bond into the aromatic ring system.</text>
</comment>
<comment type="catalytic activity">
    <reaction evidence="1">
        <text>5-O-(1-carboxyvinyl)-3-phosphoshikimate = chorismate + phosphate</text>
        <dbReference type="Rhea" id="RHEA:21020"/>
        <dbReference type="ChEBI" id="CHEBI:29748"/>
        <dbReference type="ChEBI" id="CHEBI:43474"/>
        <dbReference type="ChEBI" id="CHEBI:57701"/>
        <dbReference type="EC" id="4.2.3.5"/>
    </reaction>
</comment>
<comment type="cofactor">
    <cofactor evidence="1">
        <name>FMNH2</name>
        <dbReference type="ChEBI" id="CHEBI:57618"/>
    </cofactor>
    <text evidence="1">Reduced FMN (FMNH(2)).</text>
</comment>
<comment type="pathway">
    <text evidence="1">Metabolic intermediate biosynthesis; chorismate biosynthesis; chorismate from D-erythrose 4-phosphate and phosphoenolpyruvate: step 7/7.</text>
</comment>
<comment type="similarity">
    <text evidence="1">Belongs to the chorismate synthase family.</text>
</comment>
<feature type="chain" id="PRO_0000256367" description="Chorismate synthase">
    <location>
        <begin position="1"/>
        <end position="366"/>
    </location>
</feature>
<feature type="binding site" evidence="1">
    <location>
        <position position="48"/>
    </location>
    <ligand>
        <name>NADP(+)</name>
        <dbReference type="ChEBI" id="CHEBI:58349"/>
    </ligand>
</feature>
<feature type="binding site" evidence="1">
    <location>
        <begin position="125"/>
        <end position="127"/>
    </location>
    <ligand>
        <name>FMN</name>
        <dbReference type="ChEBI" id="CHEBI:58210"/>
    </ligand>
</feature>
<feature type="binding site" evidence="1">
    <location>
        <position position="285"/>
    </location>
    <ligand>
        <name>FMN</name>
        <dbReference type="ChEBI" id="CHEBI:58210"/>
    </ligand>
</feature>
<feature type="binding site" evidence="1">
    <location>
        <begin position="300"/>
        <end position="304"/>
    </location>
    <ligand>
        <name>FMN</name>
        <dbReference type="ChEBI" id="CHEBI:58210"/>
    </ligand>
</feature>
<feature type="binding site" evidence="1">
    <location>
        <position position="327"/>
    </location>
    <ligand>
        <name>FMN</name>
        <dbReference type="ChEBI" id="CHEBI:58210"/>
    </ligand>
</feature>